<keyword id="KW-0165">Cleavage on pair of basic residues</keyword>
<keyword id="KW-0202">Cytokine</keyword>
<keyword id="KW-1015">Disulfide bond</keyword>
<keyword id="KW-0325">Glycoprotein</keyword>
<keyword id="KW-0339">Growth factor</keyword>
<keyword id="KW-0358">Heparin-binding</keyword>
<keyword id="KW-0964">Secreted</keyword>
<keyword id="KW-0732">Signal</keyword>
<name>GDF8_SYLGR</name>
<evidence type="ECO:0000250" key="1">
    <source>
        <dbReference type="UniProtKB" id="O08689"/>
    </source>
</evidence>
<evidence type="ECO:0000250" key="2">
    <source>
        <dbReference type="UniProtKB" id="O14793"/>
    </source>
</evidence>
<evidence type="ECO:0000255" key="3"/>
<evidence type="ECO:0000305" key="4"/>
<organism>
    <name type="scientific">Sylvicapra grimmia</name>
    <name type="common">Grey duiker</name>
    <dbReference type="NCBI Taxonomy" id="119562"/>
    <lineage>
        <taxon>Eukaryota</taxon>
        <taxon>Metazoa</taxon>
        <taxon>Chordata</taxon>
        <taxon>Craniata</taxon>
        <taxon>Vertebrata</taxon>
        <taxon>Euteleostomi</taxon>
        <taxon>Mammalia</taxon>
        <taxon>Eutheria</taxon>
        <taxon>Laurasiatheria</taxon>
        <taxon>Artiodactyla</taxon>
        <taxon>Ruminantia</taxon>
        <taxon>Pecora</taxon>
        <taxon>Bovidae</taxon>
        <taxon>Cephalophinae</taxon>
        <taxon>Sylvicapra</taxon>
    </lineage>
</organism>
<accession>Q5USV6</accession>
<sequence>MQKLQIFVYIYLFMLTVAGPVDLNENSEQKENVEKKGLCNACLWRQNNKSSRLEAIKIQILSKLRLETAPNISKDAIRQLLPKAPPLRELIDQYDVQRDDSSDGSLEDDDYHVTTETVITMPTESDFLAEVQEKPKCCFFKFSSKIQHNKVIKAQLWIYLRPVKTPTTVFVQILRLIKPMKDGTRYTGIRSLKLDMNPGTGIWQSIDVKTVLQNWLKQPESNLGIEIKALDENGHDLAVTFPEPGEEGLNPFLEVKVTDTPKRARRDFGLDCDEHSTESRCCRYPLTVDFEAFGWDWIIAPKRYKANYCSGECEFLFLQKYPHTHLVHQANPKGSAGPCCTPTKMSPINMLYFNGKEQIIYGKIPGMVVDRCGCS</sequence>
<proteinExistence type="evidence at transcript level"/>
<protein>
    <recommendedName>
        <fullName>Growth/differentiation factor 8</fullName>
        <shortName>GDF-8</shortName>
    </recommendedName>
    <alternativeName>
        <fullName>Myostatin</fullName>
    </alternativeName>
</protein>
<gene>
    <name type="primary">MSTN</name>
    <name type="synonym">GDF8</name>
</gene>
<feature type="signal peptide" evidence="3">
    <location>
        <begin position="1"/>
        <end position="18"/>
    </location>
</feature>
<feature type="propeptide" id="PRO_0000033966" evidence="3">
    <location>
        <begin position="19"/>
        <end position="266"/>
    </location>
</feature>
<feature type="chain" id="PRO_0000033967" description="Growth/differentiation factor 8">
    <location>
        <begin position="267"/>
        <end position="375"/>
    </location>
</feature>
<feature type="site" description="Cleavage" evidence="1">
    <location>
        <begin position="98"/>
        <end position="99"/>
    </location>
</feature>
<feature type="glycosylation site" description="N-linked (GlcNAc...) asparagine" evidence="3">
    <location>
        <position position="48"/>
    </location>
</feature>
<feature type="glycosylation site" description="N-linked (GlcNAc...) asparagine" evidence="3">
    <location>
        <position position="71"/>
    </location>
</feature>
<feature type="disulfide bond" evidence="2">
    <location>
        <begin position="272"/>
        <end position="282"/>
    </location>
</feature>
<feature type="disulfide bond" evidence="2">
    <location>
        <begin position="281"/>
        <end position="340"/>
    </location>
</feature>
<feature type="disulfide bond" evidence="2">
    <location>
        <begin position="309"/>
        <end position="372"/>
    </location>
</feature>
<feature type="disulfide bond" evidence="2">
    <location>
        <begin position="313"/>
        <end position="374"/>
    </location>
</feature>
<feature type="disulfide bond" description="Interchain" evidence="2">
    <location>
        <position position="339"/>
    </location>
</feature>
<comment type="function">
    <text evidence="1">Acts specifically as a negative regulator of skeletal muscle growth.</text>
</comment>
<comment type="subunit">
    <text evidence="1">Homodimer; disulfide-linked. Interacts with WFIKKN2, leading to inhibit its activity. Interacts with FSTL3.</text>
</comment>
<comment type="subcellular location">
    <subcellularLocation>
        <location evidence="1">Secreted</location>
    </subcellularLocation>
</comment>
<comment type="PTM">
    <text evidence="1">Synthesized as large precursor molecule that undergoes proteolytic cleavage to generate an N-terminal propeptide and a disulfide linked C-terminal dimer, which is the biologically active molecule. The circulating form consists of a latent complex of the C-terminal dimer and other proteins, including its propeptide, which maintain the C-terminal dimer in a latent, inactive state. Ligand activation requires additional cleavage of the prodomain by a tolloid-like metalloproteinase.</text>
</comment>
<comment type="similarity">
    <text evidence="4">Belongs to the TGF-beta family.</text>
</comment>
<reference key="1">
    <citation type="journal article" date="2004" name="Mol. Phylogenet. Evol.">
        <title>Myostatin rapid sequence evolution in ruminants predates domestication.</title>
        <authorList>
            <person name="Tellgren S."/>
            <person name="Berglund A.C."/>
            <person name="Savolainen P."/>
            <person name="Janis C.M."/>
            <person name="Liberles D.A."/>
        </authorList>
    </citation>
    <scope>NUCLEOTIDE SEQUENCE [MRNA]</scope>
</reference>
<dbReference type="EMBL" id="AY629308">
    <property type="protein sequence ID" value="AAT40572.1"/>
    <property type="molecule type" value="mRNA"/>
</dbReference>
<dbReference type="SMR" id="Q5USV6"/>
<dbReference type="GlyCosmos" id="Q5USV6">
    <property type="glycosylation" value="2 sites, No reported glycans"/>
</dbReference>
<dbReference type="GO" id="GO:0005615">
    <property type="term" value="C:extracellular space"/>
    <property type="evidence" value="ECO:0007669"/>
    <property type="project" value="UniProtKB-KW"/>
</dbReference>
<dbReference type="GO" id="GO:0005125">
    <property type="term" value="F:cytokine activity"/>
    <property type="evidence" value="ECO:0007669"/>
    <property type="project" value="UniProtKB-KW"/>
</dbReference>
<dbReference type="GO" id="GO:0008083">
    <property type="term" value="F:growth factor activity"/>
    <property type="evidence" value="ECO:0007669"/>
    <property type="project" value="UniProtKB-KW"/>
</dbReference>
<dbReference type="GO" id="GO:0008201">
    <property type="term" value="F:heparin binding"/>
    <property type="evidence" value="ECO:0007669"/>
    <property type="project" value="UniProtKB-KW"/>
</dbReference>
<dbReference type="GO" id="GO:0042802">
    <property type="term" value="F:identical protein binding"/>
    <property type="evidence" value="ECO:0000250"/>
    <property type="project" value="UniProtKB"/>
</dbReference>
<dbReference type="GO" id="GO:0014839">
    <property type="term" value="P:myoblast migration involved in skeletal muscle regeneration"/>
    <property type="evidence" value="ECO:0000250"/>
    <property type="project" value="UniProtKB"/>
</dbReference>
<dbReference type="GO" id="GO:0010592">
    <property type="term" value="P:positive regulation of lamellipodium assembly"/>
    <property type="evidence" value="ECO:0000250"/>
    <property type="project" value="UniProtKB"/>
</dbReference>
<dbReference type="GO" id="GO:0010759">
    <property type="term" value="P:positive regulation of macrophage chemotaxis"/>
    <property type="evidence" value="ECO:0000250"/>
    <property type="project" value="UniProtKB"/>
</dbReference>
<dbReference type="CDD" id="cd19388">
    <property type="entry name" value="TGF_beta_GDF8"/>
    <property type="match status" value="1"/>
</dbReference>
<dbReference type="FunFam" id="2.60.120.970:FF:000001">
    <property type="entry name" value="Growth/differentiation factor 8"/>
    <property type="match status" value="1"/>
</dbReference>
<dbReference type="FunFam" id="2.10.90.10:FF:000006">
    <property type="entry name" value="growth/differentiation factor 8"/>
    <property type="match status" value="1"/>
</dbReference>
<dbReference type="Gene3D" id="2.60.120.970">
    <property type="match status" value="1"/>
</dbReference>
<dbReference type="Gene3D" id="2.10.90.10">
    <property type="entry name" value="Cystine-knot cytokines"/>
    <property type="match status" value="1"/>
</dbReference>
<dbReference type="InterPro" id="IPR029034">
    <property type="entry name" value="Cystine-knot_cytokine"/>
</dbReference>
<dbReference type="InterPro" id="IPR001839">
    <property type="entry name" value="TGF-b_C"/>
</dbReference>
<dbReference type="InterPro" id="IPR001111">
    <property type="entry name" value="TGF-b_propeptide"/>
</dbReference>
<dbReference type="InterPro" id="IPR015615">
    <property type="entry name" value="TGF-beta-rel"/>
</dbReference>
<dbReference type="InterPro" id="IPR017948">
    <property type="entry name" value="TGFb_CS"/>
</dbReference>
<dbReference type="PANTHER" id="PTHR11848:SF150">
    <property type="entry name" value="GROWTH_DIFFERENTIATION FACTOR 8"/>
    <property type="match status" value="1"/>
</dbReference>
<dbReference type="PANTHER" id="PTHR11848">
    <property type="entry name" value="TGF-BETA FAMILY"/>
    <property type="match status" value="1"/>
</dbReference>
<dbReference type="Pfam" id="PF00019">
    <property type="entry name" value="TGF_beta"/>
    <property type="match status" value="1"/>
</dbReference>
<dbReference type="Pfam" id="PF00688">
    <property type="entry name" value="TGFb_propeptide"/>
    <property type="match status" value="1"/>
</dbReference>
<dbReference type="SMART" id="SM00204">
    <property type="entry name" value="TGFB"/>
    <property type="match status" value="1"/>
</dbReference>
<dbReference type="SUPFAM" id="SSF57501">
    <property type="entry name" value="Cystine-knot cytokines"/>
    <property type="match status" value="1"/>
</dbReference>
<dbReference type="PROSITE" id="PS00250">
    <property type="entry name" value="TGF_BETA_1"/>
    <property type="match status" value="1"/>
</dbReference>
<dbReference type="PROSITE" id="PS51362">
    <property type="entry name" value="TGF_BETA_2"/>
    <property type="match status" value="1"/>
</dbReference>